<feature type="chain" id="PRO_0000311485" description="Iron-sulfur cluster insertion protein ErpA">
    <location>
        <begin position="1"/>
        <end position="116"/>
    </location>
</feature>
<feature type="binding site" evidence="1">
    <location>
        <position position="44"/>
    </location>
    <ligand>
        <name>iron-sulfur cluster</name>
        <dbReference type="ChEBI" id="CHEBI:30408"/>
    </ligand>
</feature>
<feature type="binding site" evidence="1">
    <location>
        <position position="108"/>
    </location>
    <ligand>
        <name>iron-sulfur cluster</name>
        <dbReference type="ChEBI" id="CHEBI:30408"/>
    </ligand>
</feature>
<feature type="binding site" evidence="1">
    <location>
        <position position="110"/>
    </location>
    <ligand>
        <name>iron-sulfur cluster</name>
        <dbReference type="ChEBI" id="CHEBI:30408"/>
    </ligand>
</feature>
<sequence>MSEVVQSVDPINFTEAASLKVKELIEEEGDNSLSLRVYITGGGCSGFQYAFAFDNEVKEDDMVITKNGVRLLVDSMSFQYLVGADVDYKDDVEGAYFVIRNPNAKTTCGCGSSFSV</sequence>
<gene>
    <name evidence="1" type="primary">erpA</name>
    <name type="ordered locus">FTT_0700</name>
</gene>
<proteinExistence type="inferred from homology"/>
<protein>
    <recommendedName>
        <fullName evidence="1">Iron-sulfur cluster insertion protein ErpA</fullName>
    </recommendedName>
</protein>
<reference key="1">
    <citation type="journal article" date="2005" name="Nat. Genet.">
        <title>The complete genome sequence of Francisella tularensis, the causative agent of tularemia.</title>
        <authorList>
            <person name="Larsson P."/>
            <person name="Oyston P.C.F."/>
            <person name="Chain P."/>
            <person name="Chu M.C."/>
            <person name="Duffield M."/>
            <person name="Fuxelius H.-H."/>
            <person name="Garcia E."/>
            <person name="Haelltorp G."/>
            <person name="Johansson D."/>
            <person name="Isherwood K.E."/>
            <person name="Karp P.D."/>
            <person name="Larsson E."/>
            <person name="Liu Y."/>
            <person name="Michell S."/>
            <person name="Prior J."/>
            <person name="Prior R."/>
            <person name="Malfatti S."/>
            <person name="Sjoestedt A."/>
            <person name="Svensson K."/>
            <person name="Thompson N."/>
            <person name="Vergez L."/>
            <person name="Wagg J.K."/>
            <person name="Wren B.W."/>
            <person name="Lindler L.E."/>
            <person name="Andersson S.G.E."/>
            <person name="Forsman M."/>
            <person name="Titball R.W."/>
        </authorList>
    </citation>
    <scope>NUCLEOTIDE SEQUENCE [LARGE SCALE GENOMIC DNA]</scope>
    <source>
        <strain>SCHU S4 / Schu 4</strain>
    </source>
</reference>
<keyword id="KW-0408">Iron</keyword>
<keyword id="KW-0411">Iron-sulfur</keyword>
<keyword id="KW-0479">Metal-binding</keyword>
<keyword id="KW-1185">Reference proteome</keyword>
<comment type="function">
    <text evidence="1">Required for insertion of 4Fe-4S clusters for at least IspG.</text>
</comment>
<comment type="cofactor">
    <cofactor evidence="1">
        <name>iron-sulfur cluster</name>
        <dbReference type="ChEBI" id="CHEBI:30408"/>
    </cofactor>
    <text evidence="1">Binds 1 iron-sulfur cluster per subunit.</text>
</comment>
<comment type="subunit">
    <text evidence="1">Homodimer.</text>
</comment>
<comment type="similarity">
    <text evidence="1">Belongs to the HesB/IscA family.</text>
</comment>
<dbReference type="EMBL" id="AJ749949">
    <property type="protein sequence ID" value="CAG45333.1"/>
    <property type="molecule type" value="Genomic_DNA"/>
</dbReference>
<dbReference type="RefSeq" id="WP_003016875.1">
    <property type="nucleotide sequence ID" value="NZ_CP010290.1"/>
</dbReference>
<dbReference type="RefSeq" id="YP_169716.1">
    <property type="nucleotide sequence ID" value="NC_006570.2"/>
</dbReference>
<dbReference type="SMR" id="Q5NGX6"/>
<dbReference type="IntAct" id="Q5NGX6">
    <property type="interactions" value="1"/>
</dbReference>
<dbReference type="STRING" id="177416.FTT_0700"/>
<dbReference type="DNASU" id="3191027"/>
<dbReference type="EnsemblBacteria" id="CAG45333">
    <property type="protein sequence ID" value="CAG45333"/>
    <property type="gene ID" value="FTT_0700"/>
</dbReference>
<dbReference type="GeneID" id="75263905"/>
<dbReference type="KEGG" id="ftu:FTT_0700"/>
<dbReference type="eggNOG" id="COG0316">
    <property type="taxonomic scope" value="Bacteria"/>
</dbReference>
<dbReference type="OrthoDB" id="9801228at2"/>
<dbReference type="Proteomes" id="UP000001174">
    <property type="component" value="Chromosome"/>
</dbReference>
<dbReference type="GO" id="GO:0051537">
    <property type="term" value="F:2 iron, 2 sulfur cluster binding"/>
    <property type="evidence" value="ECO:0007669"/>
    <property type="project" value="UniProtKB-ARBA"/>
</dbReference>
<dbReference type="GO" id="GO:0051539">
    <property type="term" value="F:4 iron, 4 sulfur cluster binding"/>
    <property type="evidence" value="ECO:0007669"/>
    <property type="project" value="TreeGrafter"/>
</dbReference>
<dbReference type="GO" id="GO:0005506">
    <property type="term" value="F:iron ion binding"/>
    <property type="evidence" value="ECO:0007669"/>
    <property type="project" value="UniProtKB-UniRule"/>
</dbReference>
<dbReference type="GO" id="GO:0016226">
    <property type="term" value="P:iron-sulfur cluster assembly"/>
    <property type="evidence" value="ECO:0007669"/>
    <property type="project" value="UniProtKB-UniRule"/>
</dbReference>
<dbReference type="FunFam" id="2.60.300.12:FF:000002">
    <property type="entry name" value="Iron-sulfur cluster insertion protein ErpA"/>
    <property type="match status" value="1"/>
</dbReference>
<dbReference type="Gene3D" id="2.60.300.12">
    <property type="entry name" value="HesB-like domain"/>
    <property type="match status" value="1"/>
</dbReference>
<dbReference type="HAMAP" id="MF_01380">
    <property type="entry name" value="Fe_S_insert_ErpA"/>
    <property type="match status" value="1"/>
</dbReference>
<dbReference type="InterPro" id="IPR000361">
    <property type="entry name" value="FeS_biogenesis"/>
</dbReference>
<dbReference type="InterPro" id="IPR016092">
    <property type="entry name" value="FeS_cluster_insertion"/>
</dbReference>
<dbReference type="InterPro" id="IPR017870">
    <property type="entry name" value="FeS_cluster_insertion_CS"/>
</dbReference>
<dbReference type="InterPro" id="IPR023063">
    <property type="entry name" value="FeS_cluster_insertion_RrpA"/>
</dbReference>
<dbReference type="InterPro" id="IPR035903">
    <property type="entry name" value="HesB-like_dom_sf"/>
</dbReference>
<dbReference type="NCBIfam" id="TIGR00049">
    <property type="entry name" value="iron-sulfur cluster assembly accessory protein"/>
    <property type="match status" value="1"/>
</dbReference>
<dbReference type="NCBIfam" id="NF010147">
    <property type="entry name" value="PRK13623.1"/>
    <property type="match status" value="1"/>
</dbReference>
<dbReference type="PANTHER" id="PTHR43011">
    <property type="entry name" value="IRON-SULFUR CLUSTER ASSEMBLY 2 HOMOLOG, MITOCHONDRIAL"/>
    <property type="match status" value="1"/>
</dbReference>
<dbReference type="PANTHER" id="PTHR43011:SF1">
    <property type="entry name" value="IRON-SULFUR CLUSTER ASSEMBLY 2 HOMOLOG, MITOCHONDRIAL"/>
    <property type="match status" value="1"/>
</dbReference>
<dbReference type="Pfam" id="PF01521">
    <property type="entry name" value="Fe-S_biosyn"/>
    <property type="match status" value="1"/>
</dbReference>
<dbReference type="SUPFAM" id="SSF89360">
    <property type="entry name" value="HesB-like domain"/>
    <property type="match status" value="1"/>
</dbReference>
<dbReference type="PROSITE" id="PS01152">
    <property type="entry name" value="HESB"/>
    <property type="match status" value="1"/>
</dbReference>
<accession>Q5NGX6</accession>
<name>ERPA_FRATT</name>
<evidence type="ECO:0000255" key="1">
    <source>
        <dbReference type="HAMAP-Rule" id="MF_01380"/>
    </source>
</evidence>
<organism>
    <name type="scientific">Francisella tularensis subsp. tularensis (strain SCHU S4 / Schu 4)</name>
    <dbReference type="NCBI Taxonomy" id="177416"/>
    <lineage>
        <taxon>Bacteria</taxon>
        <taxon>Pseudomonadati</taxon>
        <taxon>Pseudomonadota</taxon>
        <taxon>Gammaproteobacteria</taxon>
        <taxon>Thiotrichales</taxon>
        <taxon>Francisellaceae</taxon>
        <taxon>Francisella</taxon>
    </lineage>
</organism>